<feature type="chain" id="PRO_0000302574" description="Acyl-[acyl-carrier-protein]--UDP-N-acetylglucosamine O-acyltransferase">
    <location>
        <begin position="1"/>
        <end position="262"/>
    </location>
</feature>
<comment type="function">
    <text evidence="1">Involved in the biosynthesis of lipid A, a phosphorylated glycolipid that anchors the lipopolysaccharide to the outer membrane of the cell.</text>
</comment>
<comment type="catalytic activity">
    <reaction evidence="1">
        <text>a (3R)-hydroxyacyl-[ACP] + UDP-N-acetyl-alpha-D-glucosamine = a UDP-3-O-[(3R)-3-hydroxyacyl]-N-acetyl-alpha-D-glucosamine + holo-[ACP]</text>
        <dbReference type="Rhea" id="RHEA:67812"/>
        <dbReference type="Rhea" id="RHEA-COMP:9685"/>
        <dbReference type="Rhea" id="RHEA-COMP:9945"/>
        <dbReference type="ChEBI" id="CHEBI:57705"/>
        <dbReference type="ChEBI" id="CHEBI:64479"/>
        <dbReference type="ChEBI" id="CHEBI:78827"/>
        <dbReference type="ChEBI" id="CHEBI:173225"/>
        <dbReference type="EC" id="2.3.1.129"/>
    </reaction>
</comment>
<comment type="pathway">
    <text evidence="1">Glycolipid biosynthesis; lipid IV(A) biosynthesis; lipid IV(A) from (3R)-3-hydroxytetradecanoyl-[acyl-carrier-protein] and UDP-N-acetyl-alpha-D-glucosamine: step 1/6.</text>
</comment>
<comment type="subunit">
    <text evidence="1">Homotrimer.</text>
</comment>
<comment type="subcellular location">
    <subcellularLocation>
        <location evidence="1">Cytoplasm</location>
    </subcellularLocation>
</comment>
<comment type="similarity">
    <text evidence="1">Belongs to the transferase hexapeptide repeat family. LpxA subfamily.</text>
</comment>
<organism>
    <name type="scientific">Escherichia coli O6:K15:H31 (strain 536 / UPEC)</name>
    <dbReference type="NCBI Taxonomy" id="362663"/>
    <lineage>
        <taxon>Bacteria</taxon>
        <taxon>Pseudomonadati</taxon>
        <taxon>Pseudomonadota</taxon>
        <taxon>Gammaproteobacteria</taxon>
        <taxon>Enterobacterales</taxon>
        <taxon>Enterobacteriaceae</taxon>
        <taxon>Escherichia</taxon>
    </lineage>
</organism>
<sequence length="262" mass="28080">MIDKSAFVHPTAIVEEGASIGANAHIGPFCIVGPHVEIGEGTVLKSHVVVNGHTKIGRDNEIYQFASIGEVNQDLKYAGEPTRVEIGDRNRIRESVTIHRGTVQGGGLTKVGSDNLLMINAHIAHDCTVGNRCILANNATLAGHVSVDDFAIIGGMTAVHQFCIIGAHVMVGGCSGVAQDVPPYVIAQGNHATPFGVNIEGLKRRGFSREAITAIRNAYKLIYRSGKTLDEVKPEIAELAETYPEVKAFTDFFARSTRGLIR</sequence>
<accession>Q0TLF2</accession>
<name>LPXA_ECOL5</name>
<evidence type="ECO:0000255" key="1">
    <source>
        <dbReference type="HAMAP-Rule" id="MF_00387"/>
    </source>
</evidence>
<reference key="1">
    <citation type="journal article" date="2006" name="Mol. Microbiol.">
        <title>Role of pathogenicity island-associated integrases in the genome plasticity of uropathogenic Escherichia coli strain 536.</title>
        <authorList>
            <person name="Hochhut B."/>
            <person name="Wilde C."/>
            <person name="Balling G."/>
            <person name="Middendorf B."/>
            <person name="Dobrindt U."/>
            <person name="Brzuszkiewicz E."/>
            <person name="Gottschalk G."/>
            <person name="Carniel E."/>
            <person name="Hacker J."/>
        </authorList>
    </citation>
    <scope>NUCLEOTIDE SEQUENCE [LARGE SCALE GENOMIC DNA]</scope>
    <source>
        <strain>536 / UPEC</strain>
    </source>
</reference>
<dbReference type="EC" id="2.3.1.129" evidence="1"/>
<dbReference type="EMBL" id="CP000247">
    <property type="protein sequence ID" value="ABG68229.1"/>
    <property type="molecule type" value="Genomic_DNA"/>
</dbReference>
<dbReference type="RefSeq" id="WP_000565966.1">
    <property type="nucleotide sequence ID" value="NC_008253.1"/>
</dbReference>
<dbReference type="SMR" id="Q0TLF2"/>
<dbReference type="GeneID" id="93777244"/>
<dbReference type="KEGG" id="ecp:ECP_0189"/>
<dbReference type="HOGENOM" id="CLU_061249_0_0_6"/>
<dbReference type="UniPathway" id="UPA00359">
    <property type="reaction ID" value="UER00477"/>
</dbReference>
<dbReference type="Proteomes" id="UP000009182">
    <property type="component" value="Chromosome"/>
</dbReference>
<dbReference type="GO" id="GO:0005737">
    <property type="term" value="C:cytoplasm"/>
    <property type="evidence" value="ECO:0007669"/>
    <property type="project" value="UniProtKB-SubCell"/>
</dbReference>
<dbReference type="GO" id="GO:0016020">
    <property type="term" value="C:membrane"/>
    <property type="evidence" value="ECO:0007669"/>
    <property type="project" value="GOC"/>
</dbReference>
<dbReference type="GO" id="GO:0008780">
    <property type="term" value="F:acyl-[acyl-carrier-protein]-UDP-N-acetylglucosamine O-acyltransferase activity"/>
    <property type="evidence" value="ECO:0007669"/>
    <property type="project" value="UniProtKB-UniRule"/>
</dbReference>
<dbReference type="GO" id="GO:0009245">
    <property type="term" value="P:lipid A biosynthetic process"/>
    <property type="evidence" value="ECO:0007669"/>
    <property type="project" value="UniProtKB-UniRule"/>
</dbReference>
<dbReference type="CDD" id="cd03351">
    <property type="entry name" value="LbH_UDP-GlcNAc_AT"/>
    <property type="match status" value="1"/>
</dbReference>
<dbReference type="FunFam" id="1.20.1180.10:FF:000001">
    <property type="entry name" value="Acyl-[acyl-carrier-protein]--UDP-N-acetylglucosamine O-acyltransferase"/>
    <property type="match status" value="1"/>
</dbReference>
<dbReference type="FunFam" id="2.160.10.10:FF:000003">
    <property type="entry name" value="Acyl-[acyl-carrier-protein]--UDP-N-acetylglucosamine O-acyltransferase"/>
    <property type="match status" value="1"/>
</dbReference>
<dbReference type="Gene3D" id="2.160.10.10">
    <property type="entry name" value="Hexapeptide repeat proteins"/>
    <property type="match status" value="1"/>
</dbReference>
<dbReference type="Gene3D" id="1.20.1180.10">
    <property type="entry name" value="Udp N-acetylglucosamine O-acyltransferase, C-terminal domain"/>
    <property type="match status" value="1"/>
</dbReference>
<dbReference type="HAMAP" id="MF_00387">
    <property type="entry name" value="LpxA"/>
    <property type="match status" value="1"/>
</dbReference>
<dbReference type="InterPro" id="IPR029098">
    <property type="entry name" value="Acetyltransf_C"/>
</dbReference>
<dbReference type="InterPro" id="IPR037157">
    <property type="entry name" value="Acetyltransf_C_sf"/>
</dbReference>
<dbReference type="InterPro" id="IPR001451">
    <property type="entry name" value="Hexapep"/>
</dbReference>
<dbReference type="InterPro" id="IPR018357">
    <property type="entry name" value="Hexapep_transf_CS"/>
</dbReference>
<dbReference type="InterPro" id="IPR010137">
    <property type="entry name" value="Lipid_A_LpxA"/>
</dbReference>
<dbReference type="InterPro" id="IPR011004">
    <property type="entry name" value="Trimer_LpxA-like_sf"/>
</dbReference>
<dbReference type="NCBIfam" id="TIGR01852">
    <property type="entry name" value="lipid_A_lpxA"/>
    <property type="match status" value="1"/>
</dbReference>
<dbReference type="NCBIfam" id="NF003657">
    <property type="entry name" value="PRK05289.1"/>
    <property type="match status" value="1"/>
</dbReference>
<dbReference type="PANTHER" id="PTHR43480">
    <property type="entry name" value="ACYL-[ACYL-CARRIER-PROTEIN]--UDP-N-ACETYLGLUCOSAMINE O-ACYLTRANSFERASE"/>
    <property type="match status" value="1"/>
</dbReference>
<dbReference type="PANTHER" id="PTHR43480:SF1">
    <property type="entry name" value="ACYL-[ACYL-CARRIER-PROTEIN]--UDP-N-ACETYLGLUCOSAMINE O-ACYLTRANSFERASE, MITOCHONDRIAL-RELATED"/>
    <property type="match status" value="1"/>
</dbReference>
<dbReference type="Pfam" id="PF13720">
    <property type="entry name" value="Acetyltransf_11"/>
    <property type="match status" value="1"/>
</dbReference>
<dbReference type="Pfam" id="PF00132">
    <property type="entry name" value="Hexapep"/>
    <property type="match status" value="2"/>
</dbReference>
<dbReference type="PIRSF" id="PIRSF000456">
    <property type="entry name" value="UDP-GlcNAc_acltr"/>
    <property type="match status" value="1"/>
</dbReference>
<dbReference type="SUPFAM" id="SSF51161">
    <property type="entry name" value="Trimeric LpxA-like enzymes"/>
    <property type="match status" value="1"/>
</dbReference>
<dbReference type="PROSITE" id="PS00101">
    <property type="entry name" value="HEXAPEP_TRANSFERASES"/>
    <property type="match status" value="2"/>
</dbReference>
<keyword id="KW-0012">Acyltransferase</keyword>
<keyword id="KW-0963">Cytoplasm</keyword>
<keyword id="KW-0441">Lipid A biosynthesis</keyword>
<keyword id="KW-0444">Lipid biosynthesis</keyword>
<keyword id="KW-0443">Lipid metabolism</keyword>
<keyword id="KW-0677">Repeat</keyword>
<keyword id="KW-0808">Transferase</keyword>
<protein>
    <recommendedName>
        <fullName evidence="1">Acyl-[acyl-carrier-protein]--UDP-N-acetylglucosamine O-acyltransferase</fullName>
        <shortName evidence="1">UDP-N-acetylglucosamine acyltransferase</shortName>
        <ecNumber evidence="1">2.3.1.129</ecNumber>
    </recommendedName>
</protein>
<proteinExistence type="inferred from homology"/>
<gene>
    <name evidence="1" type="primary">lpxA</name>
    <name type="ordered locus">ECP_0189</name>
</gene>